<organism>
    <name type="scientific">Azobacteroides pseudotrichonymphae genomovar. CFP2</name>
    <dbReference type="NCBI Taxonomy" id="511995"/>
    <lineage>
        <taxon>Bacteria</taxon>
        <taxon>Pseudomonadati</taxon>
        <taxon>Bacteroidota</taxon>
        <taxon>Bacteroidia</taxon>
        <taxon>Bacteroidales</taxon>
        <taxon>Candidatus Azobacteroides</taxon>
    </lineage>
</organism>
<protein>
    <recommendedName>
        <fullName evidence="1">Chaperonin GroEL</fullName>
        <ecNumber evidence="1">5.6.1.7</ecNumber>
    </recommendedName>
    <alternativeName>
        <fullName evidence="1">60 kDa chaperonin</fullName>
    </alternativeName>
    <alternativeName>
        <fullName evidence="1">Chaperonin-60</fullName>
        <shortName evidence="1">Cpn60</shortName>
    </alternativeName>
</protein>
<reference key="1">
    <citation type="journal article" date="2008" name="Science">
        <title>Genome of an endosymbiont coupling N2 fixation to cellulolysis within RT protist cells in termite gut.</title>
        <authorList>
            <person name="Hongoh Y."/>
            <person name="Sharma V.K."/>
            <person name="Prakash T."/>
            <person name="Noda S."/>
            <person name="Toh H."/>
            <person name="Taylor T.D."/>
            <person name="Kudo T."/>
            <person name="Sakaki Y."/>
            <person name="Toyoda A."/>
            <person name="Hattori M."/>
            <person name="Ohkuma M."/>
        </authorList>
    </citation>
    <scope>NUCLEOTIDE SEQUENCE [LARGE SCALE GENOMIC DNA]</scope>
</reference>
<accession>B6YQT0</accession>
<name>CH60_AZOPC</name>
<sequence length="542" mass="58053">MAKDIKFNLDARDLLKKGVDELADAVKVTLGPKGRNVIIDKKFGAPQITKDGVTVAKEIELSDHFQNMGAQLVKEVASKTNDNAGDGTTTATVLAQSIINVGMKNVAAGANPMDLKRGIDKAVAKVVESLKKQSRAVGDDFGKIENVAKISANGDETIGSLIAEAMKKVKKEGVITIEESKGIETYVDVVEGMQFDRGYISSYFVTNTDKMEADLENPYILIHDKKISVLKDILPILEKTIQTGRPMLIIAEDIESEALATLVVNRLRGSLKVCAVKAPGFGDRRKEMLEDIAVLTGGVVISEEKGLKLEGVTIDMLGTAEKVTISKDNTVIVNGAGEKSAISARVSQIKTQIEKTTSDYDSEKLQERLAKLAGGVAVLYVGAPSEVEMKEKKDRVDDALSATRAAIEEGTVPGGGVAYVRAISILEGFKGINEDETTGIEIVKRAIEEPLRQIVENAGKEGAVIAQRVKEEKDDFGYNARTGIYEDLYVAGVIDPTKVARVALENAASIAGMLLTTECVITEVKEENPAPAMPPMGGGGMM</sequence>
<feature type="chain" id="PRO_1000129970" description="Chaperonin GroEL">
    <location>
        <begin position="1"/>
        <end position="542"/>
    </location>
</feature>
<feature type="binding site" evidence="1">
    <location>
        <begin position="29"/>
        <end position="32"/>
    </location>
    <ligand>
        <name>ATP</name>
        <dbReference type="ChEBI" id="CHEBI:30616"/>
    </ligand>
</feature>
<feature type="binding site" evidence="1">
    <location>
        <position position="50"/>
    </location>
    <ligand>
        <name>ATP</name>
        <dbReference type="ChEBI" id="CHEBI:30616"/>
    </ligand>
</feature>
<feature type="binding site" evidence="1">
    <location>
        <begin position="86"/>
        <end position="90"/>
    </location>
    <ligand>
        <name>ATP</name>
        <dbReference type="ChEBI" id="CHEBI:30616"/>
    </ligand>
</feature>
<feature type="binding site" evidence="1">
    <location>
        <position position="415"/>
    </location>
    <ligand>
        <name>ATP</name>
        <dbReference type="ChEBI" id="CHEBI:30616"/>
    </ligand>
</feature>
<feature type="binding site" evidence="1">
    <location>
        <position position="495"/>
    </location>
    <ligand>
        <name>ATP</name>
        <dbReference type="ChEBI" id="CHEBI:30616"/>
    </ligand>
</feature>
<proteinExistence type="inferred from homology"/>
<gene>
    <name evidence="1" type="primary">groEL</name>
    <name evidence="1" type="synonym">groL</name>
    <name type="ordered locus">CFPG_289</name>
</gene>
<dbReference type="EC" id="5.6.1.7" evidence="1"/>
<dbReference type="EMBL" id="AP010656">
    <property type="protein sequence ID" value="BAG83552.1"/>
    <property type="molecule type" value="Genomic_DNA"/>
</dbReference>
<dbReference type="RefSeq" id="WP_012573313.1">
    <property type="nucleotide sequence ID" value="NC_011565.1"/>
</dbReference>
<dbReference type="SMR" id="B6YQT0"/>
<dbReference type="STRING" id="511995.CFPG_289"/>
<dbReference type="KEGG" id="aps:CFPG_289"/>
<dbReference type="eggNOG" id="COG0459">
    <property type="taxonomic scope" value="Bacteria"/>
</dbReference>
<dbReference type="HOGENOM" id="CLU_016503_3_0_10"/>
<dbReference type="OrthoDB" id="9766614at2"/>
<dbReference type="Proteomes" id="UP000000723">
    <property type="component" value="Chromosome"/>
</dbReference>
<dbReference type="GO" id="GO:0005737">
    <property type="term" value="C:cytoplasm"/>
    <property type="evidence" value="ECO:0007669"/>
    <property type="project" value="UniProtKB-SubCell"/>
</dbReference>
<dbReference type="GO" id="GO:0005524">
    <property type="term" value="F:ATP binding"/>
    <property type="evidence" value="ECO:0007669"/>
    <property type="project" value="UniProtKB-UniRule"/>
</dbReference>
<dbReference type="GO" id="GO:0140662">
    <property type="term" value="F:ATP-dependent protein folding chaperone"/>
    <property type="evidence" value="ECO:0007669"/>
    <property type="project" value="InterPro"/>
</dbReference>
<dbReference type="GO" id="GO:0016853">
    <property type="term" value="F:isomerase activity"/>
    <property type="evidence" value="ECO:0007669"/>
    <property type="project" value="UniProtKB-KW"/>
</dbReference>
<dbReference type="GO" id="GO:0051082">
    <property type="term" value="F:unfolded protein binding"/>
    <property type="evidence" value="ECO:0007669"/>
    <property type="project" value="UniProtKB-UniRule"/>
</dbReference>
<dbReference type="GO" id="GO:0042026">
    <property type="term" value="P:protein refolding"/>
    <property type="evidence" value="ECO:0007669"/>
    <property type="project" value="UniProtKB-UniRule"/>
</dbReference>
<dbReference type="CDD" id="cd03344">
    <property type="entry name" value="GroEL"/>
    <property type="match status" value="1"/>
</dbReference>
<dbReference type="FunFam" id="1.10.560.10:FF:000001">
    <property type="entry name" value="60 kDa chaperonin"/>
    <property type="match status" value="1"/>
</dbReference>
<dbReference type="FunFam" id="3.50.7.10:FF:000001">
    <property type="entry name" value="60 kDa chaperonin"/>
    <property type="match status" value="1"/>
</dbReference>
<dbReference type="Gene3D" id="3.50.7.10">
    <property type="entry name" value="GroEL"/>
    <property type="match status" value="1"/>
</dbReference>
<dbReference type="Gene3D" id="1.10.560.10">
    <property type="entry name" value="GroEL-like equatorial domain"/>
    <property type="match status" value="1"/>
</dbReference>
<dbReference type="Gene3D" id="3.30.260.10">
    <property type="entry name" value="TCP-1-like chaperonin intermediate domain"/>
    <property type="match status" value="1"/>
</dbReference>
<dbReference type="HAMAP" id="MF_00600">
    <property type="entry name" value="CH60"/>
    <property type="match status" value="1"/>
</dbReference>
<dbReference type="InterPro" id="IPR018370">
    <property type="entry name" value="Chaperonin_Cpn60_CS"/>
</dbReference>
<dbReference type="InterPro" id="IPR001844">
    <property type="entry name" value="Cpn60/GroEL"/>
</dbReference>
<dbReference type="InterPro" id="IPR002423">
    <property type="entry name" value="Cpn60/GroEL/TCP-1"/>
</dbReference>
<dbReference type="InterPro" id="IPR027409">
    <property type="entry name" value="GroEL-like_apical_dom_sf"/>
</dbReference>
<dbReference type="InterPro" id="IPR027413">
    <property type="entry name" value="GROEL-like_equatorial_sf"/>
</dbReference>
<dbReference type="InterPro" id="IPR027410">
    <property type="entry name" value="TCP-1-like_intermed_sf"/>
</dbReference>
<dbReference type="NCBIfam" id="TIGR02348">
    <property type="entry name" value="GroEL"/>
    <property type="match status" value="1"/>
</dbReference>
<dbReference type="NCBIfam" id="NF000592">
    <property type="entry name" value="PRK00013.1"/>
    <property type="match status" value="1"/>
</dbReference>
<dbReference type="NCBIfam" id="NF009487">
    <property type="entry name" value="PRK12849.1"/>
    <property type="match status" value="1"/>
</dbReference>
<dbReference type="NCBIfam" id="NF009488">
    <property type="entry name" value="PRK12850.1"/>
    <property type="match status" value="1"/>
</dbReference>
<dbReference type="NCBIfam" id="NF009489">
    <property type="entry name" value="PRK12851.1"/>
    <property type="match status" value="1"/>
</dbReference>
<dbReference type="PANTHER" id="PTHR45633">
    <property type="entry name" value="60 KDA HEAT SHOCK PROTEIN, MITOCHONDRIAL"/>
    <property type="match status" value="1"/>
</dbReference>
<dbReference type="Pfam" id="PF00118">
    <property type="entry name" value="Cpn60_TCP1"/>
    <property type="match status" value="1"/>
</dbReference>
<dbReference type="PRINTS" id="PR00298">
    <property type="entry name" value="CHAPERONIN60"/>
</dbReference>
<dbReference type="SUPFAM" id="SSF52029">
    <property type="entry name" value="GroEL apical domain-like"/>
    <property type="match status" value="1"/>
</dbReference>
<dbReference type="SUPFAM" id="SSF48592">
    <property type="entry name" value="GroEL equatorial domain-like"/>
    <property type="match status" value="1"/>
</dbReference>
<dbReference type="SUPFAM" id="SSF54849">
    <property type="entry name" value="GroEL-intermediate domain like"/>
    <property type="match status" value="1"/>
</dbReference>
<dbReference type="PROSITE" id="PS00296">
    <property type="entry name" value="CHAPERONINS_CPN60"/>
    <property type="match status" value="1"/>
</dbReference>
<keyword id="KW-0067">ATP-binding</keyword>
<keyword id="KW-0143">Chaperone</keyword>
<keyword id="KW-0963">Cytoplasm</keyword>
<keyword id="KW-0413">Isomerase</keyword>
<keyword id="KW-0547">Nucleotide-binding</keyword>
<keyword id="KW-1185">Reference proteome</keyword>
<evidence type="ECO:0000255" key="1">
    <source>
        <dbReference type="HAMAP-Rule" id="MF_00600"/>
    </source>
</evidence>
<comment type="function">
    <text evidence="1">Together with its co-chaperonin GroES, plays an essential role in assisting protein folding. The GroEL-GroES system forms a nano-cage that allows encapsulation of the non-native substrate proteins and provides a physical environment optimized to promote and accelerate protein folding.</text>
</comment>
<comment type="catalytic activity">
    <reaction evidence="1">
        <text>ATP + H2O + a folded polypeptide = ADP + phosphate + an unfolded polypeptide.</text>
        <dbReference type="EC" id="5.6.1.7"/>
    </reaction>
</comment>
<comment type="subunit">
    <text evidence="1">Forms a cylinder of 14 subunits composed of two heptameric rings stacked back-to-back. Interacts with the co-chaperonin GroES.</text>
</comment>
<comment type="subcellular location">
    <subcellularLocation>
        <location evidence="1">Cytoplasm</location>
    </subcellularLocation>
</comment>
<comment type="similarity">
    <text evidence="1">Belongs to the chaperonin (HSP60) family.</text>
</comment>